<feature type="signal peptide" evidence="3">
    <location>
        <begin position="1"/>
        <end position="18"/>
    </location>
</feature>
<feature type="chain" id="PRO_0000429204" description="Kunitz-type U19-barytoxin-Tl1a">
    <location>
        <begin position="19"/>
        <end position="176"/>
    </location>
</feature>
<feature type="domain" description="BPTI/Kunitz inhibitor 1" evidence="4">
    <location>
        <begin position="28"/>
        <end position="78"/>
    </location>
</feature>
<feature type="domain" description="BPTI/Kunitz inhibitor 2" evidence="4">
    <location>
        <begin position="106"/>
        <end position="156"/>
    </location>
</feature>
<feature type="region of interest" description="Disordered" evidence="5">
    <location>
        <begin position="155"/>
        <end position="176"/>
    </location>
</feature>
<feature type="site" description="Reactive bond for chymotrypsin" evidence="1">
    <location>
        <begin position="38"/>
        <end position="39"/>
    </location>
</feature>
<feature type="site" description="Reactive bond for trypsin" evidence="1">
    <location>
        <begin position="116"/>
        <end position="117"/>
    </location>
</feature>
<feature type="disulfide bond" evidence="4">
    <location>
        <begin position="28"/>
        <end position="78"/>
    </location>
</feature>
<feature type="disulfide bond" evidence="4">
    <location>
        <begin position="37"/>
        <end position="61"/>
    </location>
</feature>
<feature type="disulfide bond" evidence="4">
    <location>
        <begin position="53"/>
        <end position="74"/>
    </location>
</feature>
<feature type="disulfide bond" evidence="4">
    <location>
        <begin position="106"/>
        <end position="156"/>
    </location>
</feature>
<feature type="disulfide bond" evidence="4">
    <location>
        <begin position="115"/>
        <end position="139"/>
    </location>
</feature>
<feature type="disulfide bond" evidence="4">
    <location>
        <begin position="131"/>
        <end position="152"/>
    </location>
</feature>
<keyword id="KW-1015">Disulfide bond</keyword>
<keyword id="KW-0646">Protease inhibitor</keyword>
<keyword id="KW-0677">Repeat</keyword>
<keyword id="KW-0964">Secreted</keyword>
<keyword id="KW-0722">Serine protease inhibitor</keyword>
<keyword id="KW-0732">Signal</keyword>
<evidence type="ECO:0000250" key="1"/>
<evidence type="ECO:0000250" key="2">
    <source>
        <dbReference type="UniProtKB" id="P68425"/>
    </source>
</evidence>
<evidence type="ECO:0000255" key="3"/>
<evidence type="ECO:0000255" key="4">
    <source>
        <dbReference type="PROSITE-ProRule" id="PRU00031"/>
    </source>
</evidence>
<evidence type="ECO:0000256" key="5">
    <source>
        <dbReference type="SAM" id="MobiDB-lite"/>
    </source>
</evidence>
<evidence type="ECO:0000305" key="6"/>
<evidence type="ECO:0000305" key="7">
    <source>
    </source>
</evidence>
<comment type="function">
    <text evidence="2">Serine protease inhibitor that inhibits trypsin at a molar ratio of 1:1.</text>
</comment>
<comment type="subcellular location">
    <subcellularLocation>
        <location evidence="7">Secreted</location>
    </subcellularLocation>
</comment>
<comment type="tissue specificity">
    <text evidence="7">Expressed by the venom gland.</text>
</comment>
<comment type="miscellaneous">
    <text evidence="7">This protein was not detected in the venom by mass spectrometry.</text>
</comment>
<comment type="similarity">
    <text evidence="6">Belongs to the venom Kunitz-type family.</text>
</comment>
<comment type="sequence caution" evidence="6">
    <conflict type="erroneous initiation">
        <sequence resource="EMBL-CDS" id="JAB84508"/>
    </conflict>
    <text>Extended N-terminus.</text>
</comment>
<name>VKT1_TRILK</name>
<accession>W4VSH9</accession>
<dbReference type="EMBL" id="GAQE01000046">
    <property type="protein sequence ID" value="JAB84508.1"/>
    <property type="status" value="ALT_INIT"/>
    <property type="molecule type" value="Transcribed_RNA"/>
</dbReference>
<dbReference type="SMR" id="W4VSH9"/>
<dbReference type="ArachnoServer" id="AS001862">
    <property type="toxin name" value="U19-barytoxin-Tl1a"/>
</dbReference>
<dbReference type="GO" id="GO:0005615">
    <property type="term" value="C:extracellular space"/>
    <property type="evidence" value="ECO:0007669"/>
    <property type="project" value="TreeGrafter"/>
</dbReference>
<dbReference type="GO" id="GO:0015459">
    <property type="term" value="F:potassium channel regulator activity"/>
    <property type="evidence" value="ECO:0007669"/>
    <property type="project" value="UniProtKB-KW"/>
</dbReference>
<dbReference type="GO" id="GO:0004867">
    <property type="term" value="F:serine-type endopeptidase inhibitor activity"/>
    <property type="evidence" value="ECO:0007669"/>
    <property type="project" value="UniProtKB-KW"/>
</dbReference>
<dbReference type="GO" id="GO:0090729">
    <property type="term" value="F:toxin activity"/>
    <property type="evidence" value="ECO:0007669"/>
    <property type="project" value="UniProtKB-KW"/>
</dbReference>
<dbReference type="GO" id="GO:0044562">
    <property type="term" value="P:envenomation resulting in negative regulation of voltage-gated potassium channel activity in another organism"/>
    <property type="evidence" value="ECO:0007669"/>
    <property type="project" value="UniProtKB-ARBA"/>
</dbReference>
<dbReference type="CDD" id="cd00109">
    <property type="entry name" value="Kunitz-type"/>
    <property type="match status" value="2"/>
</dbReference>
<dbReference type="FunFam" id="4.10.410.10:FF:000004">
    <property type="entry name" value="Tissue factor pathway inhibitor"/>
    <property type="match status" value="1"/>
</dbReference>
<dbReference type="FunFam" id="4.10.410.10:FF:000015">
    <property type="entry name" value="WAP four-disulfide core domain 6A"/>
    <property type="match status" value="1"/>
</dbReference>
<dbReference type="Gene3D" id="4.10.410.10">
    <property type="entry name" value="Pancreatic trypsin inhibitor Kunitz domain"/>
    <property type="match status" value="2"/>
</dbReference>
<dbReference type="InterPro" id="IPR002223">
    <property type="entry name" value="Kunitz_BPTI"/>
</dbReference>
<dbReference type="InterPro" id="IPR036880">
    <property type="entry name" value="Kunitz_BPTI_sf"/>
</dbReference>
<dbReference type="InterPro" id="IPR020901">
    <property type="entry name" value="Prtase_inh_Kunz-CS"/>
</dbReference>
<dbReference type="InterPro" id="IPR050098">
    <property type="entry name" value="TFPI/VKTCI-like"/>
</dbReference>
<dbReference type="PANTHER" id="PTHR10083:SF374">
    <property type="entry name" value="BPTI_KUNITZ INHIBITOR DOMAIN-CONTAINING PROTEIN"/>
    <property type="match status" value="1"/>
</dbReference>
<dbReference type="PANTHER" id="PTHR10083">
    <property type="entry name" value="KUNITZ-TYPE PROTEASE INHIBITOR-RELATED"/>
    <property type="match status" value="1"/>
</dbReference>
<dbReference type="Pfam" id="PF00014">
    <property type="entry name" value="Kunitz_BPTI"/>
    <property type="match status" value="2"/>
</dbReference>
<dbReference type="PRINTS" id="PR00759">
    <property type="entry name" value="BASICPTASE"/>
</dbReference>
<dbReference type="SMART" id="SM00131">
    <property type="entry name" value="KU"/>
    <property type="match status" value="2"/>
</dbReference>
<dbReference type="SUPFAM" id="SSF57362">
    <property type="entry name" value="BPTI-like"/>
    <property type="match status" value="2"/>
</dbReference>
<dbReference type="PROSITE" id="PS00280">
    <property type="entry name" value="BPTI_KUNITZ_1"/>
    <property type="match status" value="2"/>
</dbReference>
<dbReference type="PROSITE" id="PS50279">
    <property type="entry name" value="BPTI_KUNITZ_2"/>
    <property type="match status" value="2"/>
</dbReference>
<reference key="1">
    <citation type="journal article" date="2013" name="Toxins">
        <title>A proteomics and transcriptomics investigation of the venom from the barychelid spider Trittame loki (brush-foot trapdoor).</title>
        <authorList>
            <person name="Undheim E.A."/>
            <person name="Sunagar K."/>
            <person name="Herzig V."/>
            <person name="Kely L."/>
            <person name="Low D.H."/>
            <person name="Jackson T.N."/>
            <person name="Jones A."/>
            <person name="Kurniawan N."/>
            <person name="King G.F."/>
            <person name="Ali S.A."/>
            <person name="Antunes A."/>
            <person name="Ruder T."/>
            <person name="Fry B.G."/>
        </authorList>
    </citation>
    <scope>NUCLEOTIDE SEQUENCE [MRNA]</scope>
    <source>
        <tissue>Venom gland</tissue>
    </source>
</reference>
<sequence length="176" mass="19275">MNFELIYVSSLLLGICLANQADVVPSDCNLPADAGMCYAYFPMFFYDASSRKCLNFIYGGCGGNANRFWSEAECMEKCGGGGGGGGSSDGSQKTAKMLNLDLGDICSLEKKVGPCKAHMPRYYFNRETGLCEEFIYGGCSGNHNNFQTKEQCESFCAPGNSPRPEEETRKRTKQSY</sequence>
<organism>
    <name type="scientific">Trittame loki</name>
    <name type="common">Brush-footed trapdoor spider</name>
    <dbReference type="NCBI Taxonomy" id="1295018"/>
    <lineage>
        <taxon>Eukaryota</taxon>
        <taxon>Metazoa</taxon>
        <taxon>Ecdysozoa</taxon>
        <taxon>Arthropoda</taxon>
        <taxon>Chelicerata</taxon>
        <taxon>Arachnida</taxon>
        <taxon>Araneae</taxon>
        <taxon>Mygalomorphae</taxon>
        <taxon>Barychelidae</taxon>
        <taxon>Trittame</taxon>
    </lineage>
</organism>
<protein>
    <recommendedName>
        <fullName>Kunitz-type U19-barytoxin-Tl1a</fullName>
        <shortName>U19-BATX-Tl1a</shortName>
    </recommendedName>
    <alternativeName>
        <fullName>Kunitz-type serine protease inhibitor Kunitz-1</fullName>
    </alternativeName>
</protein>
<proteinExistence type="evidence at transcript level"/>